<feature type="chain" id="PRO_0000064335" description="Beta-defensin 13">
    <location>
        <begin position="1"/>
        <end position="42"/>
    </location>
</feature>
<feature type="disulfide bond" evidence="1">
    <location>
        <begin position="9"/>
        <end position="38"/>
    </location>
</feature>
<feature type="disulfide bond" evidence="1">
    <location>
        <begin position="16"/>
        <end position="31"/>
    </location>
</feature>
<feature type="disulfide bond" evidence="1">
    <location>
        <begin position="21"/>
        <end position="39"/>
    </location>
</feature>
<sequence length="42" mass="4450">SGISGPLSCGRNGGVCIPIRCPVPMRQIGTCFGRPVKCCRSW</sequence>
<proteinExistence type="evidence at protein level"/>
<accession>P46171</accession>
<gene>
    <name type="primary">DEFB13</name>
</gene>
<reference key="1">
    <citation type="journal article" date="1993" name="J. Biol. Chem.">
        <title>Purification, primary structures, and antibacterial activities of beta-defensins, a new family of antimicrobial peptides from bovine neutrophils.</title>
        <authorList>
            <person name="Selsted M.E."/>
            <person name="Tang Y.-Q."/>
            <person name="Morris W.L."/>
            <person name="McGuire P.A."/>
            <person name="Novotny M.J."/>
            <person name="Smith W."/>
            <person name="Henschen A.H."/>
            <person name="Cullor J.S."/>
        </authorList>
    </citation>
    <scope>PROTEIN SEQUENCE</scope>
    <scope>DISULFIDE BONDS</scope>
    <source>
        <tissue>Neutrophil</tissue>
    </source>
</reference>
<comment type="function">
    <text>Has bactericidal activity. Active against E.coli ML35 and S.aureus 502A.</text>
</comment>
<comment type="subcellular location">
    <subcellularLocation>
        <location>Secreted</location>
    </subcellularLocation>
</comment>
<comment type="tissue specificity">
    <text>Neutrophilic granules.</text>
</comment>
<comment type="similarity">
    <text evidence="2">Belongs to the beta-defensin family.</text>
</comment>
<name>DFB13_BOVIN</name>
<evidence type="ECO:0000269" key="1">
    <source>
    </source>
</evidence>
<evidence type="ECO:0000305" key="2"/>
<protein>
    <recommendedName>
        <fullName>Beta-defensin 13</fullName>
    </recommendedName>
    <alternativeName>
        <fullName>BNBD-13</fullName>
    </alternativeName>
    <alternativeName>
        <fullName>BNDB-13</fullName>
    </alternativeName>
</protein>
<keyword id="KW-0044">Antibiotic</keyword>
<keyword id="KW-0929">Antimicrobial</keyword>
<keyword id="KW-0211">Defensin</keyword>
<keyword id="KW-0903">Direct protein sequencing</keyword>
<keyword id="KW-1015">Disulfide bond</keyword>
<keyword id="KW-1185">Reference proteome</keyword>
<keyword id="KW-0964">Secreted</keyword>
<dbReference type="PIR" id="D47753">
    <property type="entry name" value="D47753"/>
</dbReference>
<dbReference type="SMR" id="P46171"/>
<dbReference type="FunCoup" id="P46171">
    <property type="interactions" value="22"/>
</dbReference>
<dbReference type="InParanoid" id="P46171"/>
<dbReference type="Proteomes" id="UP000009136">
    <property type="component" value="Unplaced"/>
</dbReference>
<dbReference type="GO" id="GO:0005615">
    <property type="term" value="C:extracellular space"/>
    <property type="evidence" value="ECO:0000318"/>
    <property type="project" value="GO_Central"/>
</dbReference>
<dbReference type="GO" id="GO:0031731">
    <property type="term" value="F:CCR6 chemokine receptor binding"/>
    <property type="evidence" value="ECO:0000318"/>
    <property type="project" value="GO_Central"/>
</dbReference>
<dbReference type="GO" id="GO:0042056">
    <property type="term" value="F:chemoattractant activity"/>
    <property type="evidence" value="ECO:0000318"/>
    <property type="project" value="GO_Central"/>
</dbReference>
<dbReference type="GO" id="GO:0060326">
    <property type="term" value="P:cell chemotaxis"/>
    <property type="evidence" value="ECO:0000318"/>
    <property type="project" value="GO_Central"/>
</dbReference>
<dbReference type="GO" id="GO:0042742">
    <property type="term" value="P:defense response to bacterium"/>
    <property type="evidence" value="ECO:0000318"/>
    <property type="project" value="GO_Central"/>
</dbReference>
<dbReference type="FunFam" id="3.10.360.10:FF:000001">
    <property type="entry name" value="Beta-defensin 1"/>
    <property type="match status" value="1"/>
</dbReference>
<dbReference type="Gene3D" id="3.10.360.10">
    <property type="entry name" value="Antimicrobial Peptide, Beta-defensin 2, Chain A"/>
    <property type="match status" value="1"/>
</dbReference>
<dbReference type="InterPro" id="IPR006080">
    <property type="entry name" value="Beta/alpha-defensin_C"/>
</dbReference>
<dbReference type="InterPro" id="IPR001855">
    <property type="entry name" value="Defensin_beta-like"/>
</dbReference>
<dbReference type="PANTHER" id="PTHR20515">
    <property type="entry name" value="BETA-DEFENSIN"/>
    <property type="match status" value="1"/>
</dbReference>
<dbReference type="PANTHER" id="PTHR20515:SF2">
    <property type="entry name" value="DEFENSIN BETA 4A"/>
    <property type="match status" value="1"/>
</dbReference>
<dbReference type="Pfam" id="PF00711">
    <property type="entry name" value="Defensin_beta"/>
    <property type="match status" value="1"/>
</dbReference>
<dbReference type="SMART" id="SM00048">
    <property type="entry name" value="DEFSN"/>
    <property type="match status" value="1"/>
</dbReference>
<dbReference type="SUPFAM" id="SSF57392">
    <property type="entry name" value="Defensin-like"/>
    <property type="match status" value="1"/>
</dbReference>
<organism>
    <name type="scientific">Bos taurus</name>
    <name type="common">Bovine</name>
    <dbReference type="NCBI Taxonomy" id="9913"/>
    <lineage>
        <taxon>Eukaryota</taxon>
        <taxon>Metazoa</taxon>
        <taxon>Chordata</taxon>
        <taxon>Craniata</taxon>
        <taxon>Vertebrata</taxon>
        <taxon>Euteleostomi</taxon>
        <taxon>Mammalia</taxon>
        <taxon>Eutheria</taxon>
        <taxon>Laurasiatheria</taxon>
        <taxon>Artiodactyla</taxon>
        <taxon>Ruminantia</taxon>
        <taxon>Pecora</taxon>
        <taxon>Bovidae</taxon>
        <taxon>Bovinae</taxon>
        <taxon>Bos</taxon>
    </lineage>
</organism>